<reference key="1">
    <citation type="journal article" date="1992" name="Gene">
        <title>Sequence analysis of a DNA fragment from Buchnera aphidicola (an endosymbiont of aphids) containing genes homologous to dnaG, rpoD, cysE, and secB.</title>
        <authorList>
            <person name="Lai C.-Y."/>
            <person name="Baumann P."/>
        </authorList>
    </citation>
    <scope>NUCLEOTIDE SEQUENCE [GENOMIC DNA]</scope>
</reference>
<reference key="2">
    <citation type="journal article" date="2002" name="Science">
        <title>50 million years of genomic stasis in endosymbiotic bacteria.</title>
        <authorList>
            <person name="Tamas I."/>
            <person name="Klasson L."/>
            <person name="Canbaeck B."/>
            <person name="Naeslund A.K."/>
            <person name="Eriksson A.-S."/>
            <person name="Wernegreen J.J."/>
            <person name="Sandstroem J.P."/>
            <person name="Moran N.A."/>
            <person name="Andersson S.G.E."/>
        </authorList>
    </citation>
    <scope>NUCLEOTIDE SEQUENCE [LARGE SCALE GENOMIC DNA]</scope>
    <source>
        <strain>Sg</strain>
    </source>
</reference>
<gene>
    <name evidence="1" type="primary">rpoD</name>
    <name type="ordered locus">BUsg_052</name>
</gene>
<evidence type="ECO:0000255" key="1">
    <source>
        <dbReference type="HAMAP-Rule" id="MF_00963"/>
    </source>
</evidence>
<evidence type="ECO:0000256" key="2">
    <source>
        <dbReference type="SAM" id="MobiDB-lite"/>
    </source>
</evidence>
<feature type="chain" id="PRO_0000093878" description="RNA polymerase sigma factor RpoD">
    <location>
        <begin position="1"/>
        <end position="617"/>
    </location>
</feature>
<feature type="DNA-binding region" description="H-T-H motif" evidence="1">
    <location>
        <begin position="577"/>
        <end position="596"/>
    </location>
</feature>
<feature type="region of interest" description="Disordered" evidence="2">
    <location>
        <begin position="192"/>
        <end position="222"/>
    </location>
</feature>
<feature type="region of interest" description="Sigma-70 factor domain-2" evidence="1">
    <location>
        <begin position="383"/>
        <end position="453"/>
    </location>
</feature>
<feature type="region of interest" description="Sigma-70 factor domain-3" evidence="1">
    <location>
        <begin position="462"/>
        <end position="538"/>
    </location>
</feature>
<feature type="region of interest" description="Sigma-70 factor domain-4" evidence="1">
    <location>
        <begin position="551"/>
        <end position="604"/>
    </location>
</feature>
<feature type="short sequence motif" description="Interaction with polymerase core subunit RpoC">
    <location>
        <begin position="407"/>
        <end position="410"/>
    </location>
</feature>
<feature type="compositionally biased region" description="Acidic residues" evidence="2">
    <location>
        <begin position="198"/>
        <end position="216"/>
    </location>
</feature>
<dbReference type="EMBL" id="M90644">
    <property type="protein sequence ID" value="AAA73234.1"/>
    <property type="molecule type" value="Genomic_DNA"/>
</dbReference>
<dbReference type="EMBL" id="AE013218">
    <property type="protein sequence ID" value="AAM67623.1"/>
    <property type="molecule type" value="Genomic_DNA"/>
</dbReference>
<dbReference type="PIR" id="JC1291">
    <property type="entry name" value="RNJV7A"/>
</dbReference>
<dbReference type="RefSeq" id="WP_011053589.1">
    <property type="nucleotide sequence ID" value="NC_004061.1"/>
</dbReference>
<dbReference type="SMR" id="P32001"/>
<dbReference type="STRING" id="198804.BUsg_052"/>
<dbReference type="GeneID" id="93003519"/>
<dbReference type="KEGG" id="bas:BUsg_052"/>
<dbReference type="eggNOG" id="COG0568">
    <property type="taxonomic scope" value="Bacteria"/>
</dbReference>
<dbReference type="HOGENOM" id="CLU_014793_7_0_6"/>
<dbReference type="Proteomes" id="UP000000416">
    <property type="component" value="Chromosome"/>
</dbReference>
<dbReference type="GO" id="GO:0005737">
    <property type="term" value="C:cytoplasm"/>
    <property type="evidence" value="ECO:0007669"/>
    <property type="project" value="UniProtKB-SubCell"/>
</dbReference>
<dbReference type="GO" id="GO:0003677">
    <property type="term" value="F:DNA binding"/>
    <property type="evidence" value="ECO:0007669"/>
    <property type="project" value="UniProtKB-UniRule"/>
</dbReference>
<dbReference type="GO" id="GO:0016987">
    <property type="term" value="F:sigma factor activity"/>
    <property type="evidence" value="ECO:0007669"/>
    <property type="project" value="UniProtKB-UniRule"/>
</dbReference>
<dbReference type="GO" id="GO:0006352">
    <property type="term" value="P:DNA-templated transcription initiation"/>
    <property type="evidence" value="ECO:0007669"/>
    <property type="project" value="UniProtKB-UniRule"/>
</dbReference>
<dbReference type="CDD" id="cd06171">
    <property type="entry name" value="Sigma70_r4"/>
    <property type="match status" value="1"/>
</dbReference>
<dbReference type="FunFam" id="1.10.220.120:FF:000001">
    <property type="entry name" value="RNA polymerase sigma factor RpoD"/>
    <property type="match status" value="1"/>
</dbReference>
<dbReference type="FunFam" id="1.10.601.10:FF:000002">
    <property type="entry name" value="RNA polymerase sigma factor RpoD"/>
    <property type="match status" value="1"/>
</dbReference>
<dbReference type="FunFam" id="1.10.10.10:FF:000002">
    <property type="entry name" value="RNA polymerase sigma factor SigA"/>
    <property type="match status" value="1"/>
</dbReference>
<dbReference type="FunFam" id="1.10.10.10:FF:000004">
    <property type="entry name" value="RNA polymerase sigma factor SigA"/>
    <property type="match status" value="1"/>
</dbReference>
<dbReference type="Gene3D" id="1.10.601.10">
    <property type="entry name" value="RNA Polymerase Primary Sigma Factor"/>
    <property type="match status" value="1"/>
</dbReference>
<dbReference type="Gene3D" id="1.10.220.120">
    <property type="entry name" value="Sigma-70 factor, region 1.1"/>
    <property type="match status" value="1"/>
</dbReference>
<dbReference type="Gene3D" id="1.10.10.10">
    <property type="entry name" value="Winged helix-like DNA-binding domain superfamily/Winged helix DNA-binding domain"/>
    <property type="match status" value="2"/>
</dbReference>
<dbReference type="HAMAP" id="MF_00963">
    <property type="entry name" value="Sigma70_RpoD_SigA"/>
    <property type="match status" value="1"/>
</dbReference>
<dbReference type="InterPro" id="IPR014284">
    <property type="entry name" value="RNA_pol_sigma-70_dom"/>
</dbReference>
<dbReference type="InterPro" id="IPR000943">
    <property type="entry name" value="RNA_pol_sigma70"/>
</dbReference>
<dbReference type="InterPro" id="IPR009042">
    <property type="entry name" value="RNA_pol_sigma70_r1_2"/>
</dbReference>
<dbReference type="InterPro" id="IPR007627">
    <property type="entry name" value="RNA_pol_sigma70_r2"/>
</dbReference>
<dbReference type="InterPro" id="IPR007624">
    <property type="entry name" value="RNA_pol_sigma70_r3"/>
</dbReference>
<dbReference type="InterPro" id="IPR007630">
    <property type="entry name" value="RNA_pol_sigma70_r4"/>
</dbReference>
<dbReference type="InterPro" id="IPR007631">
    <property type="entry name" value="RNA_pol_sigma_70_non-ess"/>
</dbReference>
<dbReference type="InterPro" id="IPR007127">
    <property type="entry name" value="RNA_pol_sigma_70_r1_1"/>
</dbReference>
<dbReference type="InterPro" id="IPR042189">
    <property type="entry name" value="RNA_pol_sigma_70_r1_1_sf"/>
</dbReference>
<dbReference type="InterPro" id="IPR013325">
    <property type="entry name" value="RNA_pol_sigma_r2"/>
</dbReference>
<dbReference type="InterPro" id="IPR013324">
    <property type="entry name" value="RNA_pol_sigma_r3/r4-like"/>
</dbReference>
<dbReference type="InterPro" id="IPR012760">
    <property type="entry name" value="RNA_pol_sigma_RpoD_C"/>
</dbReference>
<dbReference type="InterPro" id="IPR050239">
    <property type="entry name" value="Sigma-70_RNA_pol_init_factors"/>
</dbReference>
<dbReference type="InterPro" id="IPR028630">
    <property type="entry name" value="Sigma70_RpoD"/>
</dbReference>
<dbReference type="InterPro" id="IPR036388">
    <property type="entry name" value="WH-like_DNA-bd_sf"/>
</dbReference>
<dbReference type="NCBIfam" id="NF004208">
    <property type="entry name" value="PRK05658.1"/>
    <property type="match status" value="1"/>
</dbReference>
<dbReference type="NCBIfam" id="TIGR02393">
    <property type="entry name" value="RpoD_Cterm"/>
    <property type="match status" value="1"/>
</dbReference>
<dbReference type="NCBIfam" id="TIGR02937">
    <property type="entry name" value="sigma70-ECF"/>
    <property type="match status" value="1"/>
</dbReference>
<dbReference type="PANTHER" id="PTHR30603">
    <property type="entry name" value="RNA POLYMERASE SIGMA FACTOR RPO"/>
    <property type="match status" value="1"/>
</dbReference>
<dbReference type="PANTHER" id="PTHR30603:SF60">
    <property type="entry name" value="RNA POLYMERASE SIGMA FACTOR RPOD"/>
    <property type="match status" value="1"/>
</dbReference>
<dbReference type="Pfam" id="PF04546">
    <property type="entry name" value="Sigma70_ner"/>
    <property type="match status" value="1"/>
</dbReference>
<dbReference type="Pfam" id="PF03979">
    <property type="entry name" value="Sigma70_r1_1"/>
    <property type="match status" value="1"/>
</dbReference>
<dbReference type="Pfam" id="PF00140">
    <property type="entry name" value="Sigma70_r1_2"/>
    <property type="match status" value="1"/>
</dbReference>
<dbReference type="Pfam" id="PF04542">
    <property type="entry name" value="Sigma70_r2"/>
    <property type="match status" value="1"/>
</dbReference>
<dbReference type="Pfam" id="PF04539">
    <property type="entry name" value="Sigma70_r3"/>
    <property type="match status" value="1"/>
</dbReference>
<dbReference type="Pfam" id="PF04545">
    <property type="entry name" value="Sigma70_r4"/>
    <property type="match status" value="1"/>
</dbReference>
<dbReference type="PRINTS" id="PR00046">
    <property type="entry name" value="SIGMA70FCT"/>
</dbReference>
<dbReference type="SUPFAM" id="SSF88946">
    <property type="entry name" value="Sigma2 domain of RNA polymerase sigma factors"/>
    <property type="match status" value="1"/>
</dbReference>
<dbReference type="SUPFAM" id="SSF88659">
    <property type="entry name" value="Sigma3 and sigma4 domains of RNA polymerase sigma factors"/>
    <property type="match status" value="2"/>
</dbReference>
<dbReference type="PROSITE" id="PS00715">
    <property type="entry name" value="SIGMA70_1"/>
    <property type="match status" value="1"/>
</dbReference>
<dbReference type="PROSITE" id="PS00716">
    <property type="entry name" value="SIGMA70_2"/>
    <property type="match status" value="1"/>
</dbReference>
<comment type="function">
    <text evidence="1">Sigma factors are initiation factors that promote the attachment of RNA polymerase to specific initiation sites and are then released. This sigma factor is the primary sigma factor during exponential growth.</text>
</comment>
<comment type="subunit">
    <text evidence="1">Interacts transiently with the RNA polymerase catalytic core.</text>
</comment>
<comment type="subcellular location">
    <subcellularLocation>
        <location evidence="1">Cytoplasm</location>
    </subcellularLocation>
</comment>
<comment type="similarity">
    <text evidence="1">Belongs to the sigma-70 factor family. RpoD/SigA subfamily.</text>
</comment>
<protein>
    <recommendedName>
        <fullName evidence="1">RNA polymerase sigma factor RpoD</fullName>
    </recommendedName>
    <alternativeName>
        <fullName evidence="1">Sigma-70</fullName>
    </alternativeName>
</protein>
<accession>P32001</accession>
<keyword id="KW-0963">Cytoplasm</keyword>
<keyword id="KW-0238">DNA-binding</keyword>
<keyword id="KW-0731">Sigma factor</keyword>
<keyword id="KW-0804">Transcription</keyword>
<keyword id="KW-0805">Transcription regulation</keyword>
<organism>
    <name type="scientific">Buchnera aphidicola subsp. Schizaphis graminum (strain Sg)</name>
    <dbReference type="NCBI Taxonomy" id="198804"/>
    <lineage>
        <taxon>Bacteria</taxon>
        <taxon>Pseudomonadati</taxon>
        <taxon>Pseudomonadota</taxon>
        <taxon>Gammaproteobacteria</taxon>
        <taxon>Enterobacterales</taxon>
        <taxon>Erwiniaceae</taxon>
        <taxon>Buchnera</taxon>
    </lineage>
</organism>
<proteinExistence type="inferred from homology"/>
<sequence>MEHNPKSQLKLLVTHGKEQGYLTYAEVNDHLPEEIIDSEQIDDIIQMINDMGIQVVEEAPDADDLILNEINTDTDEDAVEAATQVLSSVESELGRTTDPVRMYMREMGTVELLTREGEIDIAKRIEEGINQVQSSVSEYPEAITYLLEQYDRIKTGQIRLSDIITGFVDPNAEEIFSHSTSAIHIGSEILDNITNDSNENEDENEDENEDEDENSIDPELANEKFRELRKQYTNTSNTIKNKNRNHQDSLLEIYNLSEIFKQFRLVPKQFDHLVNNMRNMMNRVRKQERKIMKLCIEECKIPKKIFLKIFSGKETDQNWFKKEQSSNQSWSKKLEEIKEKVFSSMKKLKQIEKETGLTIEQVKDINKRMSIGEAKAKRAKKEMVEANLRLVISIAKKYTNRGLQFLDLIQEGNIGLMKAVDKFEYRRGYKFSTYATWWIRQAITRSIADQARTIRIPVHMIETINKLNRISRQMLQEIGREPTPEELSEKMLIPEDKIRKVLKIAKEPISMETPIGDDDDSHLGDFIEDTTLELPLDSATSESLRSATHDVLSGLTAREAKVLRMRFGIDMNTDHTLEEVGKQFDVTRERIRQIEAKALRKLRHPSRSEVLRSFLDD</sequence>
<name>RPOD_BUCAP</name>